<evidence type="ECO:0000250" key="1"/>
<evidence type="ECO:0000256" key="2">
    <source>
        <dbReference type="SAM" id="MobiDB-lite"/>
    </source>
</evidence>
<evidence type="ECO:0000269" key="3">
    <source>
    </source>
</evidence>
<evidence type="ECO:0000269" key="4">
    <source>
    </source>
</evidence>
<evidence type="ECO:0000305" key="5"/>
<feature type="chain" id="PRO_0000185657" description="Nucleosome assembly protein 1-like 3">
    <location>
        <begin position="1"/>
        <end position="506"/>
    </location>
</feature>
<feature type="region of interest" description="Disordered" evidence="2">
    <location>
        <begin position="1"/>
        <end position="95"/>
    </location>
</feature>
<feature type="region of interest" description="Disordered" evidence="2">
    <location>
        <begin position="157"/>
        <end position="307"/>
    </location>
</feature>
<feature type="compositionally biased region" description="Low complexity" evidence="2">
    <location>
        <begin position="35"/>
        <end position="70"/>
    </location>
</feature>
<feature type="compositionally biased region" description="Acidic residues" evidence="2">
    <location>
        <begin position="157"/>
        <end position="178"/>
    </location>
</feature>
<feature type="compositionally biased region" description="Basic and acidic residues" evidence="2">
    <location>
        <begin position="196"/>
        <end position="296"/>
    </location>
</feature>
<feature type="sequence variant" id="VAR_024545" description="In dbSNP:rs1045686." evidence="3 4">
    <original>P</original>
    <variation>A</variation>
    <location>
        <position position="224"/>
    </location>
</feature>
<feature type="sequence conflict" description="In Ref. 1; BAA08904." evidence="5" ref="1">
    <original>Q</original>
    <variation>R</variation>
    <location>
        <position position="290"/>
    </location>
</feature>
<feature type="sequence conflict" description="In Ref. 1; BAA08904." evidence="5" ref="1">
    <original>W</original>
    <variation>R</variation>
    <location>
        <position position="406"/>
    </location>
</feature>
<dbReference type="EMBL" id="D50370">
    <property type="protein sequence ID" value="BAA08904.1"/>
    <property type="molecule type" value="mRNA"/>
</dbReference>
<dbReference type="EMBL" id="AK315176">
    <property type="protein sequence ID" value="BAG37617.1"/>
    <property type="molecule type" value="mRNA"/>
</dbReference>
<dbReference type="EMBL" id="AL009173">
    <property type="status" value="NOT_ANNOTATED_CDS"/>
    <property type="molecule type" value="Genomic_DNA"/>
</dbReference>
<dbReference type="CCDS" id="CCDS14465.1"/>
<dbReference type="RefSeq" id="NP_004529.2">
    <property type="nucleotide sequence ID" value="NM_004538.5"/>
</dbReference>
<dbReference type="SMR" id="Q99457"/>
<dbReference type="BioGRID" id="110756">
    <property type="interactions" value="22"/>
</dbReference>
<dbReference type="FunCoup" id="Q99457">
    <property type="interactions" value="402"/>
</dbReference>
<dbReference type="IntAct" id="Q99457">
    <property type="interactions" value="24"/>
</dbReference>
<dbReference type="MINT" id="Q99457"/>
<dbReference type="STRING" id="9606.ENSP00000362171"/>
<dbReference type="GlyGen" id="Q99457">
    <property type="glycosylation" value="1 site, 1 N-linked glycan (1 site)"/>
</dbReference>
<dbReference type="iPTMnet" id="Q99457"/>
<dbReference type="PhosphoSitePlus" id="Q99457"/>
<dbReference type="BioMuta" id="NAP1L3"/>
<dbReference type="DMDM" id="60416442"/>
<dbReference type="jPOST" id="Q99457"/>
<dbReference type="MassIVE" id="Q99457"/>
<dbReference type="PaxDb" id="9606-ENSP00000362171"/>
<dbReference type="PeptideAtlas" id="Q99457"/>
<dbReference type="ProteomicsDB" id="78276"/>
<dbReference type="Antibodypedia" id="14445">
    <property type="antibodies" value="137 antibodies from 18 providers"/>
</dbReference>
<dbReference type="DNASU" id="4675"/>
<dbReference type="Ensembl" id="ENST00000373079.4">
    <property type="protein sequence ID" value="ENSP00000362171.3"/>
    <property type="gene ID" value="ENSG00000186310.10"/>
</dbReference>
<dbReference type="GeneID" id="4675"/>
<dbReference type="KEGG" id="hsa:4675"/>
<dbReference type="MANE-Select" id="ENST00000373079.4">
    <property type="protein sequence ID" value="ENSP00000362171.3"/>
    <property type="RefSeq nucleotide sequence ID" value="NM_004538.6"/>
    <property type="RefSeq protein sequence ID" value="NP_004529.2"/>
</dbReference>
<dbReference type="UCSC" id="uc004efq.4">
    <property type="organism name" value="human"/>
</dbReference>
<dbReference type="AGR" id="HGNC:7639"/>
<dbReference type="CTD" id="4675"/>
<dbReference type="DisGeNET" id="4675"/>
<dbReference type="GeneCards" id="NAP1L3"/>
<dbReference type="HGNC" id="HGNC:7639">
    <property type="gene designation" value="NAP1L3"/>
</dbReference>
<dbReference type="HPA" id="ENSG00000186310">
    <property type="expression patterns" value="Tissue enhanced (brain)"/>
</dbReference>
<dbReference type="MIM" id="300117">
    <property type="type" value="gene"/>
</dbReference>
<dbReference type="neXtProt" id="NX_Q99457"/>
<dbReference type="OpenTargets" id="ENSG00000186310"/>
<dbReference type="PharmGKB" id="PA31441"/>
<dbReference type="VEuPathDB" id="HostDB:ENSG00000186310"/>
<dbReference type="eggNOG" id="KOG1507">
    <property type="taxonomic scope" value="Eukaryota"/>
</dbReference>
<dbReference type="GeneTree" id="ENSGT00940000162927"/>
<dbReference type="InParanoid" id="Q99457"/>
<dbReference type="OMA" id="GKDYGNR"/>
<dbReference type="OrthoDB" id="27325at2759"/>
<dbReference type="PAN-GO" id="Q99457">
    <property type="GO annotations" value="5 GO annotations based on evolutionary models"/>
</dbReference>
<dbReference type="PhylomeDB" id="Q99457"/>
<dbReference type="TreeFam" id="TF314349"/>
<dbReference type="PathwayCommons" id="Q99457"/>
<dbReference type="SignaLink" id="Q99457"/>
<dbReference type="BioGRID-ORCS" id="4675">
    <property type="hits" value="11 hits in 772 CRISPR screens"/>
</dbReference>
<dbReference type="ChiTaRS" id="NAP1L3">
    <property type="organism name" value="human"/>
</dbReference>
<dbReference type="GenomeRNAi" id="4675"/>
<dbReference type="Pharos" id="Q99457">
    <property type="development level" value="Tbio"/>
</dbReference>
<dbReference type="PRO" id="PR:Q99457"/>
<dbReference type="Proteomes" id="UP000005640">
    <property type="component" value="Chromosome X"/>
</dbReference>
<dbReference type="RNAct" id="Q99457">
    <property type="molecule type" value="protein"/>
</dbReference>
<dbReference type="Bgee" id="ENSG00000186310">
    <property type="expression patterns" value="Expressed in Brodmann (1909) area 23 and 170 other cell types or tissues"/>
</dbReference>
<dbReference type="ExpressionAtlas" id="Q99457">
    <property type="expression patterns" value="baseline and differential"/>
</dbReference>
<dbReference type="GO" id="GO:0000785">
    <property type="term" value="C:chromatin"/>
    <property type="evidence" value="ECO:0000318"/>
    <property type="project" value="GO_Central"/>
</dbReference>
<dbReference type="GO" id="GO:0005634">
    <property type="term" value="C:nucleus"/>
    <property type="evidence" value="ECO:0000318"/>
    <property type="project" value="GO_Central"/>
</dbReference>
<dbReference type="GO" id="GO:0003682">
    <property type="term" value="F:chromatin binding"/>
    <property type="evidence" value="ECO:0000318"/>
    <property type="project" value="GO_Central"/>
</dbReference>
<dbReference type="GO" id="GO:0042393">
    <property type="term" value="F:histone binding"/>
    <property type="evidence" value="ECO:0000318"/>
    <property type="project" value="GO_Central"/>
</dbReference>
<dbReference type="GO" id="GO:0006334">
    <property type="term" value="P:nucleosome assembly"/>
    <property type="evidence" value="ECO:0000318"/>
    <property type="project" value="GO_Central"/>
</dbReference>
<dbReference type="FunFam" id="1.20.5.1500:FF:000001">
    <property type="entry name" value="Nucleosome assembly protein 1-like 1"/>
    <property type="match status" value="1"/>
</dbReference>
<dbReference type="FunFam" id="3.30.1120.90:FF:000001">
    <property type="entry name" value="Nucleosome assembly protein 1-like 1"/>
    <property type="match status" value="1"/>
</dbReference>
<dbReference type="Gene3D" id="1.20.5.1500">
    <property type="match status" value="1"/>
</dbReference>
<dbReference type="Gene3D" id="3.30.1120.90">
    <property type="entry name" value="Nucleosome assembly protein"/>
    <property type="match status" value="1"/>
</dbReference>
<dbReference type="InterPro" id="IPR037231">
    <property type="entry name" value="NAP-like_sf"/>
</dbReference>
<dbReference type="InterPro" id="IPR002164">
    <property type="entry name" value="NAP_family"/>
</dbReference>
<dbReference type="PANTHER" id="PTHR11875">
    <property type="entry name" value="TESTIS-SPECIFIC Y-ENCODED PROTEIN"/>
    <property type="match status" value="1"/>
</dbReference>
<dbReference type="Pfam" id="PF00956">
    <property type="entry name" value="NAP"/>
    <property type="match status" value="1"/>
</dbReference>
<dbReference type="SUPFAM" id="SSF143113">
    <property type="entry name" value="NAP-like"/>
    <property type="match status" value="1"/>
</dbReference>
<comment type="interaction">
    <interactant intactId="EBI-8645631">
        <id>Q99457</id>
    </interactant>
    <interactant intactId="EBI-10968534">
        <id>P50570-2</id>
        <label>DNM2</label>
    </interactant>
    <organismsDiffer>false</organismsDiffer>
    <experiments>3</experiments>
</comment>
<comment type="interaction">
    <interactant intactId="EBI-8645631">
        <id>Q99457</id>
    </interactant>
    <interactant intactId="EBI-744302">
        <id>P14136</id>
        <label>GFAP</label>
    </interactant>
    <organismsDiffer>false</organismsDiffer>
    <experiments>3</experiments>
</comment>
<comment type="interaction">
    <interactant intactId="EBI-8645631">
        <id>Q99457</id>
    </interactant>
    <interactant intactId="EBI-1055254">
        <id>Q8WXH2</id>
        <label>JPH3</label>
    </interactant>
    <organismsDiffer>false</organismsDiffer>
    <experiments>3</experiments>
</comment>
<comment type="interaction">
    <interactant intactId="EBI-8645631">
        <id>Q99457</id>
    </interactant>
    <interactant intactId="EBI-1189067">
        <id>P51608</id>
        <label>MECP2</label>
    </interactant>
    <organismsDiffer>false</organismsDiffer>
    <experiments>3</experiments>
</comment>
<comment type="interaction">
    <interactant intactId="EBI-8645631">
        <id>Q99457</id>
    </interactant>
    <interactant intactId="EBI-3911716">
        <id>Q9ULW6</id>
        <label>NAP1L2</label>
    </interactant>
    <organismsDiffer>false</organismsDiffer>
    <experiments>4</experiments>
</comment>
<comment type="interaction">
    <interactant intactId="EBI-8645631">
        <id>Q99457</id>
    </interactant>
    <interactant intactId="EBI-713665">
        <id>P19404</id>
        <label>NDUFV2</label>
    </interactant>
    <organismsDiffer>false</organismsDiffer>
    <experiments>3</experiments>
</comment>
<comment type="subcellular location">
    <subcellularLocation>
        <location evidence="1">Nucleus</location>
    </subcellularLocation>
</comment>
<comment type="similarity">
    <text evidence="5">Belongs to the nucleosome assembly protein (NAP) family.</text>
</comment>
<proteinExistence type="evidence at protein level"/>
<reference key="1">
    <citation type="journal article" date="1996" name="Cytogenet. Cell Genet.">
        <title>Cloning, expression pattern and mapping to Xq of NAP1L3, a gene encoding a peptide homologous to human and yeast nucleosome assembly proteins.</title>
        <authorList>
            <person name="Watanabe T.K."/>
            <person name="Fujiwara T."/>
            <person name="Nakamura Y."/>
            <person name="Hirai Y."/>
            <person name="Maekawa H."/>
            <person name="Takahashi E."/>
        </authorList>
    </citation>
    <scope>NUCLEOTIDE SEQUENCE [MRNA]</scope>
    <scope>VARIANT ALA-224</scope>
    <source>
        <tissue>Fetal brain</tissue>
    </source>
</reference>
<reference key="2">
    <citation type="journal article" date="2004" name="Nat. Genet.">
        <title>Complete sequencing and characterization of 21,243 full-length human cDNAs.</title>
        <authorList>
            <person name="Ota T."/>
            <person name="Suzuki Y."/>
            <person name="Nishikawa T."/>
            <person name="Otsuki T."/>
            <person name="Sugiyama T."/>
            <person name="Irie R."/>
            <person name="Wakamatsu A."/>
            <person name="Hayashi K."/>
            <person name="Sato H."/>
            <person name="Nagai K."/>
            <person name="Kimura K."/>
            <person name="Makita H."/>
            <person name="Sekine M."/>
            <person name="Obayashi M."/>
            <person name="Nishi T."/>
            <person name="Shibahara T."/>
            <person name="Tanaka T."/>
            <person name="Ishii S."/>
            <person name="Yamamoto J."/>
            <person name="Saito K."/>
            <person name="Kawai Y."/>
            <person name="Isono Y."/>
            <person name="Nakamura Y."/>
            <person name="Nagahari K."/>
            <person name="Murakami K."/>
            <person name="Yasuda T."/>
            <person name="Iwayanagi T."/>
            <person name="Wagatsuma M."/>
            <person name="Shiratori A."/>
            <person name="Sudo H."/>
            <person name="Hosoiri T."/>
            <person name="Kaku Y."/>
            <person name="Kodaira H."/>
            <person name="Kondo H."/>
            <person name="Sugawara M."/>
            <person name="Takahashi M."/>
            <person name="Kanda K."/>
            <person name="Yokoi T."/>
            <person name="Furuya T."/>
            <person name="Kikkawa E."/>
            <person name="Omura Y."/>
            <person name="Abe K."/>
            <person name="Kamihara K."/>
            <person name="Katsuta N."/>
            <person name="Sato K."/>
            <person name="Tanikawa M."/>
            <person name="Yamazaki M."/>
            <person name="Ninomiya K."/>
            <person name="Ishibashi T."/>
            <person name="Yamashita H."/>
            <person name="Murakawa K."/>
            <person name="Fujimori K."/>
            <person name="Tanai H."/>
            <person name="Kimata M."/>
            <person name="Watanabe M."/>
            <person name="Hiraoka S."/>
            <person name="Chiba Y."/>
            <person name="Ishida S."/>
            <person name="Ono Y."/>
            <person name="Takiguchi S."/>
            <person name="Watanabe S."/>
            <person name="Yosida M."/>
            <person name="Hotuta T."/>
            <person name="Kusano J."/>
            <person name="Kanehori K."/>
            <person name="Takahashi-Fujii A."/>
            <person name="Hara H."/>
            <person name="Tanase T.-O."/>
            <person name="Nomura Y."/>
            <person name="Togiya S."/>
            <person name="Komai F."/>
            <person name="Hara R."/>
            <person name="Takeuchi K."/>
            <person name="Arita M."/>
            <person name="Imose N."/>
            <person name="Musashino K."/>
            <person name="Yuuki H."/>
            <person name="Oshima A."/>
            <person name="Sasaki N."/>
            <person name="Aotsuka S."/>
            <person name="Yoshikawa Y."/>
            <person name="Matsunawa H."/>
            <person name="Ichihara T."/>
            <person name="Shiohata N."/>
            <person name="Sano S."/>
            <person name="Moriya S."/>
            <person name="Momiyama H."/>
            <person name="Satoh N."/>
            <person name="Takami S."/>
            <person name="Terashima Y."/>
            <person name="Suzuki O."/>
            <person name="Nakagawa S."/>
            <person name="Senoh A."/>
            <person name="Mizoguchi H."/>
            <person name="Goto Y."/>
            <person name="Shimizu F."/>
            <person name="Wakebe H."/>
            <person name="Hishigaki H."/>
            <person name="Watanabe T."/>
            <person name="Sugiyama A."/>
            <person name="Takemoto M."/>
            <person name="Kawakami B."/>
            <person name="Yamazaki M."/>
            <person name="Watanabe K."/>
            <person name="Kumagai A."/>
            <person name="Itakura S."/>
            <person name="Fukuzumi Y."/>
            <person name="Fujimori Y."/>
            <person name="Komiyama M."/>
            <person name="Tashiro H."/>
            <person name="Tanigami A."/>
            <person name="Fujiwara T."/>
            <person name="Ono T."/>
            <person name="Yamada K."/>
            <person name="Fujii Y."/>
            <person name="Ozaki K."/>
            <person name="Hirao M."/>
            <person name="Ohmori Y."/>
            <person name="Kawabata A."/>
            <person name="Hikiji T."/>
            <person name="Kobatake N."/>
            <person name="Inagaki H."/>
            <person name="Ikema Y."/>
            <person name="Okamoto S."/>
            <person name="Okitani R."/>
            <person name="Kawakami T."/>
            <person name="Noguchi S."/>
            <person name="Itoh T."/>
            <person name="Shigeta K."/>
            <person name="Senba T."/>
            <person name="Matsumura K."/>
            <person name="Nakajima Y."/>
            <person name="Mizuno T."/>
            <person name="Morinaga M."/>
            <person name="Sasaki M."/>
            <person name="Togashi T."/>
            <person name="Oyama M."/>
            <person name="Hata H."/>
            <person name="Watanabe M."/>
            <person name="Komatsu T."/>
            <person name="Mizushima-Sugano J."/>
            <person name="Satoh T."/>
            <person name="Shirai Y."/>
            <person name="Takahashi Y."/>
            <person name="Nakagawa K."/>
            <person name="Okumura K."/>
            <person name="Nagase T."/>
            <person name="Nomura N."/>
            <person name="Kikuchi H."/>
            <person name="Masuho Y."/>
            <person name="Yamashita R."/>
            <person name="Nakai K."/>
            <person name="Yada T."/>
            <person name="Nakamura Y."/>
            <person name="Ohara O."/>
            <person name="Isogai T."/>
            <person name="Sugano S."/>
        </authorList>
    </citation>
    <scope>NUCLEOTIDE SEQUENCE [LARGE SCALE MRNA]</scope>
    <scope>VARIANT ALA-224</scope>
    <source>
        <tissue>Heart</tissue>
    </source>
</reference>
<reference key="3">
    <citation type="journal article" date="2005" name="Nature">
        <title>The DNA sequence of the human X chromosome.</title>
        <authorList>
            <person name="Ross M.T."/>
            <person name="Grafham D.V."/>
            <person name="Coffey A.J."/>
            <person name="Scherer S."/>
            <person name="McLay K."/>
            <person name="Muzny D."/>
            <person name="Platzer M."/>
            <person name="Howell G.R."/>
            <person name="Burrows C."/>
            <person name="Bird C.P."/>
            <person name="Frankish A."/>
            <person name="Lovell F.L."/>
            <person name="Howe K.L."/>
            <person name="Ashurst J.L."/>
            <person name="Fulton R.S."/>
            <person name="Sudbrak R."/>
            <person name="Wen G."/>
            <person name="Jones M.C."/>
            <person name="Hurles M.E."/>
            <person name="Andrews T.D."/>
            <person name="Scott C.E."/>
            <person name="Searle S."/>
            <person name="Ramser J."/>
            <person name="Whittaker A."/>
            <person name="Deadman R."/>
            <person name="Carter N.P."/>
            <person name="Hunt S.E."/>
            <person name="Chen R."/>
            <person name="Cree A."/>
            <person name="Gunaratne P."/>
            <person name="Havlak P."/>
            <person name="Hodgson A."/>
            <person name="Metzker M.L."/>
            <person name="Richards S."/>
            <person name="Scott G."/>
            <person name="Steffen D."/>
            <person name="Sodergren E."/>
            <person name="Wheeler D.A."/>
            <person name="Worley K.C."/>
            <person name="Ainscough R."/>
            <person name="Ambrose K.D."/>
            <person name="Ansari-Lari M.A."/>
            <person name="Aradhya S."/>
            <person name="Ashwell R.I."/>
            <person name="Babbage A.K."/>
            <person name="Bagguley C.L."/>
            <person name="Ballabio A."/>
            <person name="Banerjee R."/>
            <person name="Barker G.E."/>
            <person name="Barlow K.F."/>
            <person name="Barrett I.P."/>
            <person name="Bates K.N."/>
            <person name="Beare D.M."/>
            <person name="Beasley H."/>
            <person name="Beasley O."/>
            <person name="Beck A."/>
            <person name="Bethel G."/>
            <person name="Blechschmidt K."/>
            <person name="Brady N."/>
            <person name="Bray-Allen S."/>
            <person name="Bridgeman A.M."/>
            <person name="Brown A.J."/>
            <person name="Brown M.J."/>
            <person name="Bonnin D."/>
            <person name="Bruford E.A."/>
            <person name="Buhay C."/>
            <person name="Burch P."/>
            <person name="Burford D."/>
            <person name="Burgess J."/>
            <person name="Burrill W."/>
            <person name="Burton J."/>
            <person name="Bye J.M."/>
            <person name="Carder C."/>
            <person name="Carrel L."/>
            <person name="Chako J."/>
            <person name="Chapman J.C."/>
            <person name="Chavez D."/>
            <person name="Chen E."/>
            <person name="Chen G."/>
            <person name="Chen Y."/>
            <person name="Chen Z."/>
            <person name="Chinault C."/>
            <person name="Ciccodicola A."/>
            <person name="Clark S.Y."/>
            <person name="Clarke G."/>
            <person name="Clee C.M."/>
            <person name="Clegg S."/>
            <person name="Clerc-Blankenburg K."/>
            <person name="Clifford K."/>
            <person name="Cobley V."/>
            <person name="Cole C.G."/>
            <person name="Conquer J.S."/>
            <person name="Corby N."/>
            <person name="Connor R.E."/>
            <person name="David R."/>
            <person name="Davies J."/>
            <person name="Davis C."/>
            <person name="Davis J."/>
            <person name="Delgado O."/>
            <person name="Deshazo D."/>
            <person name="Dhami P."/>
            <person name="Ding Y."/>
            <person name="Dinh H."/>
            <person name="Dodsworth S."/>
            <person name="Draper H."/>
            <person name="Dugan-Rocha S."/>
            <person name="Dunham A."/>
            <person name="Dunn M."/>
            <person name="Durbin K.J."/>
            <person name="Dutta I."/>
            <person name="Eades T."/>
            <person name="Ellwood M."/>
            <person name="Emery-Cohen A."/>
            <person name="Errington H."/>
            <person name="Evans K.L."/>
            <person name="Faulkner L."/>
            <person name="Francis F."/>
            <person name="Frankland J."/>
            <person name="Fraser A.E."/>
            <person name="Galgoczy P."/>
            <person name="Gilbert J."/>
            <person name="Gill R."/>
            <person name="Gloeckner G."/>
            <person name="Gregory S.G."/>
            <person name="Gribble S."/>
            <person name="Griffiths C."/>
            <person name="Grocock R."/>
            <person name="Gu Y."/>
            <person name="Gwilliam R."/>
            <person name="Hamilton C."/>
            <person name="Hart E.A."/>
            <person name="Hawes A."/>
            <person name="Heath P.D."/>
            <person name="Heitmann K."/>
            <person name="Hennig S."/>
            <person name="Hernandez J."/>
            <person name="Hinzmann B."/>
            <person name="Ho S."/>
            <person name="Hoffs M."/>
            <person name="Howden P.J."/>
            <person name="Huckle E.J."/>
            <person name="Hume J."/>
            <person name="Hunt P.J."/>
            <person name="Hunt A.R."/>
            <person name="Isherwood J."/>
            <person name="Jacob L."/>
            <person name="Johnson D."/>
            <person name="Jones S."/>
            <person name="de Jong P.J."/>
            <person name="Joseph S.S."/>
            <person name="Keenan S."/>
            <person name="Kelly S."/>
            <person name="Kershaw J.K."/>
            <person name="Khan Z."/>
            <person name="Kioschis P."/>
            <person name="Klages S."/>
            <person name="Knights A.J."/>
            <person name="Kosiura A."/>
            <person name="Kovar-Smith C."/>
            <person name="Laird G.K."/>
            <person name="Langford C."/>
            <person name="Lawlor S."/>
            <person name="Leversha M."/>
            <person name="Lewis L."/>
            <person name="Liu W."/>
            <person name="Lloyd C."/>
            <person name="Lloyd D.M."/>
            <person name="Loulseged H."/>
            <person name="Loveland J.E."/>
            <person name="Lovell J.D."/>
            <person name="Lozado R."/>
            <person name="Lu J."/>
            <person name="Lyne R."/>
            <person name="Ma J."/>
            <person name="Maheshwari M."/>
            <person name="Matthews L.H."/>
            <person name="McDowall J."/>
            <person name="McLaren S."/>
            <person name="McMurray A."/>
            <person name="Meidl P."/>
            <person name="Meitinger T."/>
            <person name="Milne S."/>
            <person name="Miner G."/>
            <person name="Mistry S.L."/>
            <person name="Morgan M."/>
            <person name="Morris S."/>
            <person name="Mueller I."/>
            <person name="Mullikin J.C."/>
            <person name="Nguyen N."/>
            <person name="Nordsiek G."/>
            <person name="Nyakatura G."/>
            <person name="O'dell C.N."/>
            <person name="Okwuonu G."/>
            <person name="Palmer S."/>
            <person name="Pandian R."/>
            <person name="Parker D."/>
            <person name="Parrish J."/>
            <person name="Pasternak S."/>
            <person name="Patel D."/>
            <person name="Pearce A.V."/>
            <person name="Pearson D.M."/>
            <person name="Pelan S.E."/>
            <person name="Perez L."/>
            <person name="Porter K.M."/>
            <person name="Ramsey Y."/>
            <person name="Reichwald K."/>
            <person name="Rhodes S."/>
            <person name="Ridler K.A."/>
            <person name="Schlessinger D."/>
            <person name="Schueler M.G."/>
            <person name="Sehra H.K."/>
            <person name="Shaw-Smith C."/>
            <person name="Shen H."/>
            <person name="Sheridan E.M."/>
            <person name="Shownkeen R."/>
            <person name="Skuce C.D."/>
            <person name="Smith M.L."/>
            <person name="Sotheran E.C."/>
            <person name="Steingruber H.E."/>
            <person name="Steward C.A."/>
            <person name="Storey R."/>
            <person name="Swann R.M."/>
            <person name="Swarbreck D."/>
            <person name="Tabor P.E."/>
            <person name="Taudien S."/>
            <person name="Taylor T."/>
            <person name="Teague B."/>
            <person name="Thomas K."/>
            <person name="Thorpe A."/>
            <person name="Timms K."/>
            <person name="Tracey A."/>
            <person name="Trevanion S."/>
            <person name="Tromans A.C."/>
            <person name="d'Urso M."/>
            <person name="Verduzco D."/>
            <person name="Villasana D."/>
            <person name="Waldron L."/>
            <person name="Wall M."/>
            <person name="Wang Q."/>
            <person name="Warren J."/>
            <person name="Warry G.L."/>
            <person name="Wei X."/>
            <person name="West A."/>
            <person name="Whitehead S.L."/>
            <person name="Whiteley M.N."/>
            <person name="Wilkinson J.E."/>
            <person name="Willey D.L."/>
            <person name="Williams G."/>
            <person name="Williams L."/>
            <person name="Williamson A."/>
            <person name="Williamson H."/>
            <person name="Wilming L."/>
            <person name="Woodmansey R.L."/>
            <person name="Wray P.W."/>
            <person name="Yen J."/>
            <person name="Zhang J."/>
            <person name="Zhou J."/>
            <person name="Zoghbi H."/>
            <person name="Zorilla S."/>
            <person name="Buck D."/>
            <person name="Reinhardt R."/>
            <person name="Poustka A."/>
            <person name="Rosenthal A."/>
            <person name="Lehrach H."/>
            <person name="Meindl A."/>
            <person name="Minx P.J."/>
            <person name="Hillier L.W."/>
            <person name="Willard H.F."/>
            <person name="Wilson R.K."/>
            <person name="Waterston R.H."/>
            <person name="Rice C.M."/>
            <person name="Vaudin M."/>
            <person name="Coulson A."/>
            <person name="Nelson D.L."/>
            <person name="Weinstock G."/>
            <person name="Sulston J.E."/>
            <person name="Durbin R.M."/>
            <person name="Hubbard T."/>
            <person name="Gibbs R.A."/>
            <person name="Beck S."/>
            <person name="Rogers J."/>
            <person name="Bentley D.R."/>
        </authorList>
    </citation>
    <scope>NUCLEOTIDE SEQUENCE [LARGE SCALE GENOMIC DNA]</scope>
</reference>
<protein>
    <recommendedName>
        <fullName>Nucleosome assembly protein 1-like 3</fullName>
    </recommendedName>
</protein>
<keyword id="KW-0539">Nucleus</keyword>
<keyword id="KW-1267">Proteomics identification</keyword>
<keyword id="KW-1185">Reference proteome</keyword>
<sequence length="506" mass="57593">MAEADFKMVSEPVAHGVAEEEMASSTSDSGEESDSSSSSSSTSDSSSSSSTSGSSSGSGSSSSSSGSTSSRSRLYRKKRVPEPSRRARRAPLGTNFVDRLPQAVRNRVQALRNIQDECDKVDTLFLKAIHDLERKYAELNKPLYDRRFQIINAEYEPTEEECEWNSEDEEFSSDEEVQDNTPSEMPPLEGEEEENPKENPEVKAEEKEVPKEIPEVKDEEKEVPKEIPEVKAEEKADSKDCMEATPEVKEDPKEVPQVKADDKEQPKATEAKARAAVRETHKRVPEERLQDSVDLKRARKGKPKREDPKGIPDYWLIVLKNVDKLGPMIQKYDEPILKFLSDVSLKFSKPGQPVSYTFEFHFLPNPYFRNEVLVKTYIIKAKPDHNDPFFSWGWEIEDCKGCKIDWRRGKDVTVTTTQSRTTATGEIEIQPRVVPNASFFNFFSPPEIPMIGKLEPREDAILDEDFEIGQILHDNVILKSIYYYTGEVNGTYYQFGKHYGNKKYRK</sequence>
<gene>
    <name type="primary">NAP1L3</name>
    <name type="synonym">BNAP</name>
</gene>
<accession>Q99457</accession>
<accession>B2RCM0</accession>
<accession>O60788</accession>
<name>NP1L3_HUMAN</name>
<organism>
    <name type="scientific">Homo sapiens</name>
    <name type="common">Human</name>
    <dbReference type="NCBI Taxonomy" id="9606"/>
    <lineage>
        <taxon>Eukaryota</taxon>
        <taxon>Metazoa</taxon>
        <taxon>Chordata</taxon>
        <taxon>Craniata</taxon>
        <taxon>Vertebrata</taxon>
        <taxon>Euteleostomi</taxon>
        <taxon>Mammalia</taxon>
        <taxon>Eutheria</taxon>
        <taxon>Euarchontoglires</taxon>
        <taxon>Primates</taxon>
        <taxon>Haplorrhini</taxon>
        <taxon>Catarrhini</taxon>
        <taxon>Hominidae</taxon>
        <taxon>Homo</taxon>
    </lineage>
</organism>